<organism>
    <name type="scientific">Notechis scutatus scutatus</name>
    <name type="common">Mainland tiger snake</name>
    <name type="synonym">Common tiger snake</name>
    <dbReference type="NCBI Taxonomy" id="70142"/>
    <lineage>
        <taxon>Eukaryota</taxon>
        <taxon>Metazoa</taxon>
        <taxon>Chordata</taxon>
        <taxon>Craniata</taxon>
        <taxon>Vertebrata</taxon>
        <taxon>Euteleostomi</taxon>
        <taxon>Lepidosauria</taxon>
        <taxon>Squamata</taxon>
        <taxon>Bifurcata</taxon>
        <taxon>Unidentata</taxon>
        <taxon>Episquamata</taxon>
        <taxon>Toxicofera</taxon>
        <taxon>Serpentes</taxon>
        <taxon>Colubroidea</taxon>
        <taxon>Elapidae</taxon>
        <taxon>Hydrophiinae</taxon>
        <taxon>Notechis</taxon>
    </lineage>
</organism>
<sequence>MSSGGLLLLLGLLTLWAELTPVSSLDRPKKPGLCPPRPQKPPCVRECKNDWRCPGEQKCCRYGCIYECRDPIFVK</sequence>
<dbReference type="EMBL" id="DQ917564">
    <property type="protein sequence ID" value="ABK63593.1"/>
    <property type="molecule type" value="mRNA"/>
</dbReference>
<dbReference type="EMBL" id="EU401825">
    <property type="protein sequence ID" value="ACC77774.1"/>
    <property type="molecule type" value="Genomic_DNA"/>
</dbReference>
<dbReference type="SMR" id="B5G6H4"/>
<dbReference type="GO" id="GO:0005576">
    <property type="term" value="C:extracellular region"/>
    <property type="evidence" value="ECO:0000250"/>
    <property type="project" value="UniProtKB"/>
</dbReference>
<dbReference type="GO" id="GO:0005615">
    <property type="term" value="C:extracellular space"/>
    <property type="evidence" value="ECO:0007669"/>
    <property type="project" value="TreeGrafter"/>
</dbReference>
<dbReference type="GO" id="GO:0004867">
    <property type="term" value="F:serine-type endopeptidase inhibitor activity"/>
    <property type="evidence" value="ECO:0007669"/>
    <property type="project" value="TreeGrafter"/>
</dbReference>
<dbReference type="GO" id="GO:0019731">
    <property type="term" value="P:antibacterial humoral response"/>
    <property type="evidence" value="ECO:0007669"/>
    <property type="project" value="TreeGrafter"/>
</dbReference>
<dbReference type="GO" id="GO:0045087">
    <property type="term" value="P:innate immune response"/>
    <property type="evidence" value="ECO:0007669"/>
    <property type="project" value="TreeGrafter"/>
</dbReference>
<dbReference type="GO" id="GO:0044278">
    <property type="term" value="P:venom-mediated disruption of cell wall in another organism"/>
    <property type="evidence" value="ECO:0000250"/>
    <property type="project" value="UniProtKB"/>
</dbReference>
<dbReference type="Gene3D" id="4.10.75.10">
    <property type="entry name" value="Elafin-like"/>
    <property type="match status" value="1"/>
</dbReference>
<dbReference type="InterPro" id="IPR036645">
    <property type="entry name" value="Elafin-like_sf"/>
</dbReference>
<dbReference type="InterPro" id="IPR008197">
    <property type="entry name" value="WAP_dom"/>
</dbReference>
<dbReference type="InterPro" id="IPR050514">
    <property type="entry name" value="WAP_four-disulfide_core"/>
</dbReference>
<dbReference type="PANTHER" id="PTHR19441:SF44">
    <property type="entry name" value="ANTILEUKOPROTEINASE"/>
    <property type="match status" value="1"/>
</dbReference>
<dbReference type="PANTHER" id="PTHR19441">
    <property type="entry name" value="WHEY ACDIC PROTEIN WAP"/>
    <property type="match status" value="1"/>
</dbReference>
<dbReference type="Pfam" id="PF00095">
    <property type="entry name" value="WAP"/>
    <property type="match status" value="1"/>
</dbReference>
<dbReference type="PRINTS" id="PR00003">
    <property type="entry name" value="4DISULPHCORE"/>
</dbReference>
<dbReference type="SMART" id="SM00217">
    <property type="entry name" value="WAP"/>
    <property type="match status" value="1"/>
</dbReference>
<dbReference type="SUPFAM" id="SSF57256">
    <property type="entry name" value="Elafin-like"/>
    <property type="match status" value="1"/>
</dbReference>
<dbReference type="PROSITE" id="PS51390">
    <property type="entry name" value="WAP"/>
    <property type="match status" value="1"/>
</dbReference>
<protein>
    <recommendedName>
        <fullName evidence="4">Notewaprin-a</fullName>
    </recommendedName>
</protein>
<name>WAPA_NOTSC</name>
<feature type="signal peptide" evidence="2">
    <location>
        <begin position="1"/>
        <end position="24"/>
    </location>
</feature>
<feature type="chain" id="PRO_5000395574" description="Notewaprin-a">
    <location>
        <begin position="25"/>
        <end position="75"/>
    </location>
</feature>
<feature type="domain" description="WAP" evidence="3">
    <location>
        <begin position="27"/>
        <end position="72"/>
    </location>
</feature>
<feature type="disulfide bond" evidence="3">
    <location>
        <begin position="34"/>
        <end position="60"/>
    </location>
</feature>
<feature type="disulfide bond" evidence="3">
    <location>
        <begin position="43"/>
        <end position="64"/>
    </location>
</feature>
<feature type="disulfide bond" evidence="3">
    <location>
        <begin position="47"/>
        <end position="59"/>
    </location>
</feature>
<feature type="disulfide bond" evidence="3">
    <location>
        <begin position="53"/>
        <end position="68"/>
    </location>
</feature>
<comment type="function">
    <text evidence="1">Damages membranes of susceptible bacteria. Has no hemolytic activity. Not toxic to mice. Does not inhibit the proteinases elastase and cathepsin G.</text>
</comment>
<comment type="subcellular location">
    <subcellularLocation>
        <location evidence="6">Secreted</location>
    </subcellularLocation>
</comment>
<comment type="tissue specificity">
    <text evidence="6">Expressed by the venom gland.</text>
</comment>
<comment type="similarity">
    <text evidence="5">Belongs to the venom waprin family.</text>
</comment>
<proteinExistence type="inferred from homology"/>
<accession>B5G6H4</accession>
<reference key="1">
    <citation type="journal article" date="2008" name="Cell. Mol. Life Sci.">
        <title>Common evolution of waprin and Kunitz-like toxin families in Australian venomous snakes.</title>
        <authorList>
            <person name="St Pierre L."/>
            <person name="Earl S.T."/>
            <person name="Filippovich I."/>
            <person name="Sorokina N."/>
            <person name="Masci P.P."/>
            <person name="De Jersey J."/>
            <person name="Lavin M.F."/>
        </authorList>
    </citation>
    <scope>NUCLEOTIDE SEQUENCE [GENOMIC DNA / MRNA]</scope>
    <source>
        <tissue>Venom gland</tissue>
    </source>
</reference>
<keyword id="KW-0044">Antibiotic</keyword>
<keyword id="KW-0929">Antimicrobial</keyword>
<keyword id="KW-1015">Disulfide bond</keyword>
<keyword id="KW-0964">Secreted</keyword>
<keyword id="KW-0732">Signal</keyword>
<evidence type="ECO:0000250" key="1">
    <source>
        <dbReference type="UniProtKB" id="P83952"/>
    </source>
</evidence>
<evidence type="ECO:0000255" key="2"/>
<evidence type="ECO:0000255" key="3">
    <source>
        <dbReference type="PROSITE-ProRule" id="PRU00722"/>
    </source>
</evidence>
<evidence type="ECO:0000303" key="4">
    <source>
    </source>
</evidence>
<evidence type="ECO:0000305" key="5"/>
<evidence type="ECO:0000305" key="6">
    <source>
    </source>
</evidence>